<feature type="chain" id="PRO_0000260065" description="Polyribonucleotide nucleotidyltransferase">
    <location>
        <begin position="1"/>
        <end position="697"/>
    </location>
</feature>
<feature type="domain" description="KH" evidence="1">
    <location>
        <begin position="557"/>
        <end position="616"/>
    </location>
</feature>
<feature type="domain" description="S1 motif" evidence="1">
    <location>
        <begin position="626"/>
        <end position="694"/>
    </location>
</feature>
<feature type="binding site" evidence="1">
    <location>
        <position position="490"/>
    </location>
    <ligand>
        <name>Mg(2+)</name>
        <dbReference type="ChEBI" id="CHEBI:18420"/>
    </ligand>
</feature>
<feature type="binding site" evidence="1">
    <location>
        <position position="496"/>
    </location>
    <ligand>
        <name>Mg(2+)</name>
        <dbReference type="ChEBI" id="CHEBI:18420"/>
    </ligand>
</feature>
<protein>
    <recommendedName>
        <fullName evidence="1">Polyribonucleotide nucleotidyltransferase</fullName>
        <ecNumber evidence="1">2.7.7.8</ecNumber>
    </recommendedName>
    <alternativeName>
        <fullName evidence="1">Polynucleotide phosphorylase</fullName>
        <shortName evidence="1">PNPase</shortName>
    </alternativeName>
</protein>
<gene>
    <name evidence="1" type="primary">pnp</name>
    <name type="synonym">pnpA</name>
    <name type="ordered locus">SSP1491</name>
</gene>
<comment type="function">
    <text evidence="1">Involved in mRNA degradation. Catalyzes the phosphorolysis of single-stranded polyribonucleotides processively in the 3'- to 5'-direction.</text>
</comment>
<comment type="catalytic activity">
    <reaction evidence="1">
        <text>RNA(n+1) + phosphate = RNA(n) + a ribonucleoside 5'-diphosphate</text>
        <dbReference type="Rhea" id="RHEA:22096"/>
        <dbReference type="Rhea" id="RHEA-COMP:14527"/>
        <dbReference type="Rhea" id="RHEA-COMP:17342"/>
        <dbReference type="ChEBI" id="CHEBI:43474"/>
        <dbReference type="ChEBI" id="CHEBI:57930"/>
        <dbReference type="ChEBI" id="CHEBI:140395"/>
        <dbReference type="EC" id="2.7.7.8"/>
    </reaction>
</comment>
<comment type="cofactor">
    <cofactor evidence="1">
        <name>Mg(2+)</name>
        <dbReference type="ChEBI" id="CHEBI:18420"/>
    </cofactor>
</comment>
<comment type="subcellular location">
    <subcellularLocation>
        <location evidence="1">Cytoplasm</location>
    </subcellularLocation>
</comment>
<comment type="similarity">
    <text evidence="1">Belongs to the polyribonucleotide nucleotidyltransferase family.</text>
</comment>
<keyword id="KW-0963">Cytoplasm</keyword>
<keyword id="KW-0460">Magnesium</keyword>
<keyword id="KW-0479">Metal-binding</keyword>
<keyword id="KW-0548">Nucleotidyltransferase</keyword>
<keyword id="KW-1185">Reference proteome</keyword>
<keyword id="KW-0694">RNA-binding</keyword>
<keyword id="KW-0808">Transferase</keyword>
<dbReference type="EC" id="2.7.7.8" evidence="1"/>
<dbReference type="EMBL" id="AP008934">
    <property type="protein sequence ID" value="BAE18636.1"/>
    <property type="molecule type" value="Genomic_DNA"/>
</dbReference>
<dbReference type="RefSeq" id="WP_011303251.1">
    <property type="nucleotide sequence ID" value="NC_007350.1"/>
</dbReference>
<dbReference type="SMR" id="Q49X62"/>
<dbReference type="GeneID" id="3617233"/>
<dbReference type="KEGG" id="ssp:SSP1491"/>
<dbReference type="PATRIC" id="fig|342451.11.peg.1494"/>
<dbReference type="eggNOG" id="COG1185">
    <property type="taxonomic scope" value="Bacteria"/>
</dbReference>
<dbReference type="HOGENOM" id="CLU_004217_2_2_9"/>
<dbReference type="OrthoDB" id="9804305at2"/>
<dbReference type="Proteomes" id="UP000006371">
    <property type="component" value="Chromosome"/>
</dbReference>
<dbReference type="GO" id="GO:0005829">
    <property type="term" value="C:cytosol"/>
    <property type="evidence" value="ECO:0007669"/>
    <property type="project" value="TreeGrafter"/>
</dbReference>
<dbReference type="GO" id="GO:0000175">
    <property type="term" value="F:3'-5'-RNA exonuclease activity"/>
    <property type="evidence" value="ECO:0007669"/>
    <property type="project" value="TreeGrafter"/>
</dbReference>
<dbReference type="GO" id="GO:0000287">
    <property type="term" value="F:magnesium ion binding"/>
    <property type="evidence" value="ECO:0007669"/>
    <property type="project" value="UniProtKB-UniRule"/>
</dbReference>
<dbReference type="GO" id="GO:0004654">
    <property type="term" value="F:polyribonucleotide nucleotidyltransferase activity"/>
    <property type="evidence" value="ECO:0007669"/>
    <property type="project" value="UniProtKB-UniRule"/>
</dbReference>
<dbReference type="GO" id="GO:0003723">
    <property type="term" value="F:RNA binding"/>
    <property type="evidence" value="ECO:0007669"/>
    <property type="project" value="UniProtKB-UniRule"/>
</dbReference>
<dbReference type="GO" id="GO:0006402">
    <property type="term" value="P:mRNA catabolic process"/>
    <property type="evidence" value="ECO:0007669"/>
    <property type="project" value="UniProtKB-UniRule"/>
</dbReference>
<dbReference type="GO" id="GO:0006396">
    <property type="term" value="P:RNA processing"/>
    <property type="evidence" value="ECO:0007669"/>
    <property type="project" value="InterPro"/>
</dbReference>
<dbReference type="CDD" id="cd02393">
    <property type="entry name" value="KH-I_PNPase"/>
    <property type="match status" value="1"/>
</dbReference>
<dbReference type="CDD" id="cd11363">
    <property type="entry name" value="RNase_PH_PNPase_1"/>
    <property type="match status" value="1"/>
</dbReference>
<dbReference type="CDD" id="cd11364">
    <property type="entry name" value="RNase_PH_PNPase_2"/>
    <property type="match status" value="1"/>
</dbReference>
<dbReference type="CDD" id="cd04472">
    <property type="entry name" value="S1_PNPase"/>
    <property type="match status" value="1"/>
</dbReference>
<dbReference type="FunFam" id="2.40.50.140:FF:000023">
    <property type="entry name" value="Polyribonucleotide nucleotidyltransferase"/>
    <property type="match status" value="1"/>
</dbReference>
<dbReference type="FunFam" id="3.30.1370.10:FF:000001">
    <property type="entry name" value="Polyribonucleotide nucleotidyltransferase"/>
    <property type="match status" value="1"/>
</dbReference>
<dbReference type="FunFam" id="3.30.230.70:FF:000001">
    <property type="entry name" value="Polyribonucleotide nucleotidyltransferase"/>
    <property type="match status" value="1"/>
</dbReference>
<dbReference type="FunFam" id="3.30.230.70:FF:000002">
    <property type="entry name" value="Polyribonucleotide nucleotidyltransferase"/>
    <property type="match status" value="1"/>
</dbReference>
<dbReference type="Gene3D" id="3.30.230.70">
    <property type="entry name" value="GHMP Kinase, N-terminal domain"/>
    <property type="match status" value="2"/>
</dbReference>
<dbReference type="Gene3D" id="3.30.1370.10">
    <property type="entry name" value="K Homology domain, type 1"/>
    <property type="match status" value="1"/>
</dbReference>
<dbReference type="Gene3D" id="2.40.50.140">
    <property type="entry name" value="Nucleic acid-binding proteins"/>
    <property type="match status" value="1"/>
</dbReference>
<dbReference type="HAMAP" id="MF_01595">
    <property type="entry name" value="PNPase"/>
    <property type="match status" value="1"/>
</dbReference>
<dbReference type="InterPro" id="IPR001247">
    <property type="entry name" value="ExoRNase_PH_dom1"/>
</dbReference>
<dbReference type="InterPro" id="IPR015847">
    <property type="entry name" value="ExoRNase_PH_dom2"/>
</dbReference>
<dbReference type="InterPro" id="IPR036345">
    <property type="entry name" value="ExoRNase_PH_dom2_sf"/>
</dbReference>
<dbReference type="InterPro" id="IPR004087">
    <property type="entry name" value="KH_dom"/>
</dbReference>
<dbReference type="InterPro" id="IPR004088">
    <property type="entry name" value="KH_dom_type_1"/>
</dbReference>
<dbReference type="InterPro" id="IPR036612">
    <property type="entry name" value="KH_dom_type_1_sf"/>
</dbReference>
<dbReference type="InterPro" id="IPR012340">
    <property type="entry name" value="NA-bd_OB-fold"/>
</dbReference>
<dbReference type="InterPro" id="IPR012162">
    <property type="entry name" value="PNPase"/>
</dbReference>
<dbReference type="InterPro" id="IPR027408">
    <property type="entry name" value="PNPase/RNase_PH_dom_sf"/>
</dbReference>
<dbReference type="InterPro" id="IPR015848">
    <property type="entry name" value="PNPase_PH_RNA-bd_bac/org-type"/>
</dbReference>
<dbReference type="InterPro" id="IPR020568">
    <property type="entry name" value="Ribosomal_Su5_D2-typ_SF"/>
</dbReference>
<dbReference type="InterPro" id="IPR003029">
    <property type="entry name" value="S1_domain"/>
</dbReference>
<dbReference type="NCBIfam" id="TIGR03591">
    <property type="entry name" value="polynuc_phos"/>
    <property type="match status" value="1"/>
</dbReference>
<dbReference type="NCBIfam" id="NF008805">
    <property type="entry name" value="PRK11824.1"/>
    <property type="match status" value="1"/>
</dbReference>
<dbReference type="PANTHER" id="PTHR11252">
    <property type="entry name" value="POLYRIBONUCLEOTIDE NUCLEOTIDYLTRANSFERASE"/>
    <property type="match status" value="1"/>
</dbReference>
<dbReference type="PANTHER" id="PTHR11252:SF0">
    <property type="entry name" value="POLYRIBONUCLEOTIDE NUCLEOTIDYLTRANSFERASE 1, MITOCHONDRIAL"/>
    <property type="match status" value="1"/>
</dbReference>
<dbReference type="Pfam" id="PF00013">
    <property type="entry name" value="KH_1"/>
    <property type="match status" value="1"/>
</dbReference>
<dbReference type="Pfam" id="PF03726">
    <property type="entry name" value="PNPase"/>
    <property type="match status" value="1"/>
</dbReference>
<dbReference type="Pfam" id="PF01138">
    <property type="entry name" value="RNase_PH"/>
    <property type="match status" value="2"/>
</dbReference>
<dbReference type="Pfam" id="PF03725">
    <property type="entry name" value="RNase_PH_C"/>
    <property type="match status" value="2"/>
</dbReference>
<dbReference type="Pfam" id="PF00575">
    <property type="entry name" value="S1"/>
    <property type="match status" value="1"/>
</dbReference>
<dbReference type="PIRSF" id="PIRSF005499">
    <property type="entry name" value="PNPase"/>
    <property type="match status" value="1"/>
</dbReference>
<dbReference type="SMART" id="SM00322">
    <property type="entry name" value="KH"/>
    <property type="match status" value="1"/>
</dbReference>
<dbReference type="SMART" id="SM00316">
    <property type="entry name" value="S1"/>
    <property type="match status" value="1"/>
</dbReference>
<dbReference type="SUPFAM" id="SSF54791">
    <property type="entry name" value="Eukaryotic type KH-domain (KH-domain type I)"/>
    <property type="match status" value="1"/>
</dbReference>
<dbReference type="SUPFAM" id="SSF50249">
    <property type="entry name" value="Nucleic acid-binding proteins"/>
    <property type="match status" value="1"/>
</dbReference>
<dbReference type="SUPFAM" id="SSF55666">
    <property type="entry name" value="Ribonuclease PH domain 2-like"/>
    <property type="match status" value="2"/>
</dbReference>
<dbReference type="SUPFAM" id="SSF54211">
    <property type="entry name" value="Ribosomal protein S5 domain 2-like"/>
    <property type="match status" value="2"/>
</dbReference>
<dbReference type="PROSITE" id="PS50084">
    <property type="entry name" value="KH_TYPE_1"/>
    <property type="match status" value="1"/>
</dbReference>
<dbReference type="PROSITE" id="PS50126">
    <property type="entry name" value="S1"/>
    <property type="match status" value="1"/>
</dbReference>
<evidence type="ECO:0000255" key="1">
    <source>
        <dbReference type="HAMAP-Rule" id="MF_01595"/>
    </source>
</evidence>
<organism>
    <name type="scientific">Staphylococcus saprophyticus subsp. saprophyticus (strain ATCC 15305 / DSM 20229 / NCIMB 8711 / NCTC 7292 / S-41)</name>
    <dbReference type="NCBI Taxonomy" id="342451"/>
    <lineage>
        <taxon>Bacteria</taxon>
        <taxon>Bacillati</taxon>
        <taxon>Bacillota</taxon>
        <taxon>Bacilli</taxon>
        <taxon>Bacillales</taxon>
        <taxon>Staphylococcaceae</taxon>
        <taxon>Staphylococcus</taxon>
    </lineage>
</organism>
<name>PNP_STAS1</name>
<proteinExistence type="inferred from homology"/>
<sequence>MSQEKKVFKTEWANRSLTIETGQLAKQANGAVLVRYGDTVVLSTAVASKEPRDGDFFPLMVNYEEKMYAAGKIPGGFKKREGRPSDEATLTARLIDRPIRPLFPKGYKYDVQIMNTVLSADPDCSPEMAAMIGSSMALSVSDIPFQGPIAGVKVGYIDGEYVINPTVAQKEVSRLDLEVAGHKDAVNMVEAGASEITESEMLEAIFFGHSEIQRLVNFQQEIVDHIQPKKKAFVPVEKDEVLVEKVKQLTQENGLKDAVLTFDKQQRDINLDALKEKVAAEFIDEEDADNEVLIKEVNSILNDLVKEEVRRLIAEEKIRPDGRKTDEIRPLESEVGVLPRAHGSGLFTRGQTQALSVLTLGSMSEYQILDGLGEEEQKRFMHHYNFPNYSVGETGPVRSPGRREIGHGALGERALSHIIPDLKDFPYTVRIVSEVLESNGSSSQASICGSTLALMDAGVPIKAPVAGIAMGLVTRDDSYTILTDIQGMEDALGDMDFKVAGTAEGITAIQMDIKIDGLTKEIIKEALDQAREGRLAILDHMLQTIDTSRSELSAFAPKVVTMTIKPEKIRDVIGPGGKKINEIIDETGVKLDIEQDGTIFIGAVDKDAIARARSIIEDITREAEVGQVYEGKVKRIEKYGAFVELFPGKDALVHISQIANERIDKVEDVLKVGDIFKIKVTEIDKQGRVNASHKALL</sequence>
<accession>Q49X62</accession>
<reference key="1">
    <citation type="journal article" date="2005" name="Proc. Natl. Acad. Sci. U.S.A.">
        <title>Whole genome sequence of Staphylococcus saprophyticus reveals the pathogenesis of uncomplicated urinary tract infection.</title>
        <authorList>
            <person name="Kuroda M."/>
            <person name="Yamashita A."/>
            <person name="Hirakawa H."/>
            <person name="Kumano M."/>
            <person name="Morikawa K."/>
            <person name="Higashide M."/>
            <person name="Maruyama A."/>
            <person name="Inose Y."/>
            <person name="Matoba K."/>
            <person name="Toh H."/>
            <person name="Kuhara S."/>
            <person name="Hattori M."/>
            <person name="Ohta T."/>
        </authorList>
    </citation>
    <scope>NUCLEOTIDE SEQUENCE [LARGE SCALE GENOMIC DNA]</scope>
    <source>
        <strain>ATCC 15305 / DSM 20229 / NCIMB 8711 / NCTC 7292 / S-41</strain>
    </source>
</reference>